<dbReference type="EC" id="2.1.1.77" evidence="1"/>
<dbReference type="EMBL" id="CP000816">
    <property type="protein sequence ID" value="ABU82059.1"/>
    <property type="molecule type" value="Genomic_DNA"/>
</dbReference>
<dbReference type="RefSeq" id="WP_012123023.1">
    <property type="nucleotide sequence ID" value="NC_009776.1"/>
</dbReference>
<dbReference type="SMR" id="A8AAV7"/>
<dbReference type="STRING" id="453591.Igni_0877"/>
<dbReference type="GeneID" id="5562192"/>
<dbReference type="KEGG" id="iho:Igni_0877"/>
<dbReference type="eggNOG" id="arCOG00976">
    <property type="taxonomic scope" value="Archaea"/>
</dbReference>
<dbReference type="HOGENOM" id="CLU_055432_2_0_2"/>
<dbReference type="OrthoDB" id="33618at2157"/>
<dbReference type="PhylomeDB" id="A8AAV7"/>
<dbReference type="Proteomes" id="UP000000262">
    <property type="component" value="Chromosome"/>
</dbReference>
<dbReference type="GO" id="GO:0005737">
    <property type="term" value="C:cytoplasm"/>
    <property type="evidence" value="ECO:0007669"/>
    <property type="project" value="UniProtKB-SubCell"/>
</dbReference>
<dbReference type="GO" id="GO:0004719">
    <property type="term" value="F:protein-L-isoaspartate (D-aspartate) O-methyltransferase activity"/>
    <property type="evidence" value="ECO:0007669"/>
    <property type="project" value="UniProtKB-UniRule"/>
</dbReference>
<dbReference type="GO" id="GO:0032259">
    <property type="term" value="P:methylation"/>
    <property type="evidence" value="ECO:0007669"/>
    <property type="project" value="UniProtKB-KW"/>
</dbReference>
<dbReference type="GO" id="GO:0036211">
    <property type="term" value="P:protein modification process"/>
    <property type="evidence" value="ECO:0007669"/>
    <property type="project" value="UniProtKB-UniRule"/>
</dbReference>
<dbReference type="GO" id="GO:0030091">
    <property type="term" value="P:protein repair"/>
    <property type="evidence" value="ECO:0007669"/>
    <property type="project" value="UniProtKB-UniRule"/>
</dbReference>
<dbReference type="CDD" id="cd02440">
    <property type="entry name" value="AdoMet_MTases"/>
    <property type="match status" value="1"/>
</dbReference>
<dbReference type="FunFam" id="3.40.50.150:FF:000010">
    <property type="entry name" value="Protein-L-isoaspartate O-methyltransferase"/>
    <property type="match status" value="1"/>
</dbReference>
<dbReference type="Gene3D" id="3.40.50.150">
    <property type="entry name" value="Vaccinia Virus protein VP39"/>
    <property type="match status" value="1"/>
</dbReference>
<dbReference type="HAMAP" id="MF_00090">
    <property type="entry name" value="PIMT"/>
    <property type="match status" value="1"/>
</dbReference>
<dbReference type="InterPro" id="IPR000682">
    <property type="entry name" value="PCMT"/>
</dbReference>
<dbReference type="InterPro" id="IPR029063">
    <property type="entry name" value="SAM-dependent_MTases_sf"/>
</dbReference>
<dbReference type="NCBIfam" id="TIGR00080">
    <property type="entry name" value="pimt"/>
    <property type="match status" value="1"/>
</dbReference>
<dbReference type="NCBIfam" id="NF001453">
    <property type="entry name" value="PRK00312.1"/>
    <property type="match status" value="1"/>
</dbReference>
<dbReference type="NCBIfam" id="NF010549">
    <property type="entry name" value="PRK13942.1"/>
    <property type="match status" value="1"/>
</dbReference>
<dbReference type="PANTHER" id="PTHR11579">
    <property type="entry name" value="PROTEIN-L-ISOASPARTATE O-METHYLTRANSFERASE"/>
    <property type="match status" value="1"/>
</dbReference>
<dbReference type="PANTHER" id="PTHR11579:SF0">
    <property type="entry name" value="PROTEIN-L-ISOASPARTATE(D-ASPARTATE) O-METHYLTRANSFERASE"/>
    <property type="match status" value="1"/>
</dbReference>
<dbReference type="Pfam" id="PF01135">
    <property type="entry name" value="PCMT"/>
    <property type="match status" value="1"/>
</dbReference>
<dbReference type="SUPFAM" id="SSF53335">
    <property type="entry name" value="S-adenosyl-L-methionine-dependent methyltransferases"/>
    <property type="match status" value="1"/>
</dbReference>
<dbReference type="PROSITE" id="PS01279">
    <property type="entry name" value="PCMT"/>
    <property type="match status" value="1"/>
</dbReference>
<accession>A8AAV7</accession>
<comment type="function">
    <text evidence="1">Catalyzes the methyl esterification of L-isoaspartyl residues in peptides and proteins that result from spontaneous decomposition of normal L-aspartyl and L-asparaginyl residues. It plays a role in the repair and/or degradation of damaged proteins.</text>
</comment>
<comment type="catalytic activity">
    <reaction evidence="1">
        <text>[protein]-L-isoaspartate + S-adenosyl-L-methionine = [protein]-L-isoaspartate alpha-methyl ester + S-adenosyl-L-homocysteine</text>
        <dbReference type="Rhea" id="RHEA:12705"/>
        <dbReference type="Rhea" id="RHEA-COMP:12143"/>
        <dbReference type="Rhea" id="RHEA-COMP:12144"/>
        <dbReference type="ChEBI" id="CHEBI:57856"/>
        <dbReference type="ChEBI" id="CHEBI:59789"/>
        <dbReference type="ChEBI" id="CHEBI:90596"/>
        <dbReference type="ChEBI" id="CHEBI:90598"/>
        <dbReference type="EC" id="2.1.1.77"/>
    </reaction>
</comment>
<comment type="subcellular location">
    <subcellularLocation>
        <location evidence="1">Cytoplasm</location>
    </subcellularLocation>
</comment>
<comment type="similarity">
    <text evidence="1">Belongs to the methyltransferase superfamily. L-isoaspartyl/D-aspartyl protein methyltransferase family.</text>
</comment>
<gene>
    <name evidence="1" type="primary">pcm</name>
    <name type="ordered locus">Igni_0877</name>
</gene>
<name>PIMT_IGNH4</name>
<keyword id="KW-0963">Cytoplasm</keyword>
<keyword id="KW-0489">Methyltransferase</keyword>
<keyword id="KW-1185">Reference proteome</keyword>
<keyword id="KW-0949">S-adenosyl-L-methionine</keyword>
<keyword id="KW-0808">Transferase</keyword>
<feature type="chain" id="PRO_0000351966" description="Protein-L-isoaspartate O-methyltransferase">
    <location>
        <begin position="1"/>
        <end position="211"/>
    </location>
</feature>
<feature type="active site" evidence="1">
    <location>
        <position position="59"/>
    </location>
</feature>
<proteinExistence type="inferred from homology"/>
<evidence type="ECO:0000255" key="1">
    <source>
        <dbReference type="HAMAP-Rule" id="MF_00090"/>
    </source>
</evidence>
<protein>
    <recommendedName>
        <fullName evidence="1">Protein-L-isoaspartate O-methyltransferase</fullName>
        <ecNumber evidence="1">2.1.1.77</ecNumber>
    </recommendedName>
    <alternativeName>
        <fullName evidence="1">L-isoaspartyl protein carboxyl methyltransferase</fullName>
    </alternativeName>
    <alternativeName>
        <fullName evidence="1">Protein L-isoaspartyl methyltransferase</fullName>
    </alternativeName>
    <alternativeName>
        <fullName evidence="1">Protein-beta-aspartate methyltransferase</fullName>
        <shortName evidence="1">PIMT</shortName>
    </alternativeName>
</protein>
<organism>
    <name type="scientific">Ignicoccus hospitalis (strain KIN4/I / DSM 18386 / JCM 14125)</name>
    <dbReference type="NCBI Taxonomy" id="453591"/>
    <lineage>
        <taxon>Archaea</taxon>
        <taxon>Thermoproteota</taxon>
        <taxon>Thermoprotei</taxon>
        <taxon>Desulfurococcales</taxon>
        <taxon>Desulfurococcaceae</taxon>
        <taxon>Ignicoccus</taxon>
    </lineage>
</organism>
<sequence>MEEKKRELIRNLIAEGYIKRKEVAEAMMKVPRELFVPEELRHMAYEDTPLPIGAGQTISAPHMVAYMVEAAELRRGDKVLEVGTGSGYHAAVMAELVGPEGHVYTIERIPELAERARERLKALGYNNVTVLVGDGSKGYPPAAPYDKIIVTAAAKRVPEALLKQLKVGGIMVIPVEEEPGYQVLYKIIKTPEGYVIKKLLPVAFVPLIEEE</sequence>
<reference key="1">
    <citation type="journal article" date="2008" name="Genome Biol.">
        <title>A genomic analysis of the archaeal system Ignicoccus hospitalis-Nanoarchaeum equitans.</title>
        <authorList>
            <person name="Podar M."/>
            <person name="Anderson I."/>
            <person name="Makarova K.S."/>
            <person name="Elkins J.G."/>
            <person name="Ivanova N."/>
            <person name="Wall M.A."/>
            <person name="Lykidis A."/>
            <person name="Mavromatis K."/>
            <person name="Sun H."/>
            <person name="Hudson M.E."/>
            <person name="Chen W."/>
            <person name="Deciu C."/>
            <person name="Hutchison D."/>
            <person name="Eads J.R."/>
            <person name="Anderson A."/>
            <person name="Fernandes F."/>
            <person name="Szeto E."/>
            <person name="Lapidus A."/>
            <person name="Kyrpides N.C."/>
            <person name="Saier M.H. Jr."/>
            <person name="Richardson P.M."/>
            <person name="Rachel R."/>
            <person name="Huber H."/>
            <person name="Eisen J.A."/>
            <person name="Koonin E.V."/>
            <person name="Keller M."/>
            <person name="Stetter K.O."/>
        </authorList>
    </citation>
    <scope>NUCLEOTIDE SEQUENCE [LARGE SCALE GENOMIC DNA]</scope>
    <source>
        <strain>KIN4/I / DSM 18386 / JCM 14125</strain>
    </source>
</reference>